<comment type="function">
    <text evidence="3">Upon expression in E.coli functions very weakly as a triacylglycerol synthase, making triacylglycerol (TG) from diolein and long-chain fatty acyl-CoA. Has no wax synthase activity.</text>
</comment>
<comment type="catalytic activity">
    <reaction evidence="1">
        <text>an acyl-CoA + a 1,2-diacyl-sn-glycerol = a triacyl-sn-glycerol + CoA</text>
        <dbReference type="Rhea" id="RHEA:10868"/>
        <dbReference type="ChEBI" id="CHEBI:17815"/>
        <dbReference type="ChEBI" id="CHEBI:57287"/>
        <dbReference type="ChEBI" id="CHEBI:58342"/>
        <dbReference type="ChEBI" id="CHEBI:64615"/>
        <dbReference type="EC" id="2.3.1.20"/>
    </reaction>
</comment>
<comment type="pathway">
    <text>Glycerolipid metabolism; triacylglycerol biosynthesis.</text>
</comment>
<comment type="induction">
    <text evidence="3">Constitutively expressed at a low level, it is not further induced by hypoxia or nitric oxide exposure.</text>
</comment>
<comment type="similarity">
    <text evidence="4">Belongs to the long-chain O-acyltransferase family.</text>
</comment>
<feature type="chain" id="PRO_0000222908" description="Putative diacyglycerol O-acyltransferase Rv1425">
    <location>
        <begin position="1"/>
        <end position="459"/>
    </location>
</feature>
<feature type="active site" description="Proton acceptor" evidence="2">
    <location>
        <position position="138"/>
    </location>
</feature>
<protein>
    <recommendedName>
        <fullName>Putative diacyglycerol O-acyltransferase Rv1425</fullName>
        <ecNumber evidence="1">2.3.1.20</ecNumber>
    </recommendedName>
    <alternativeName>
        <fullName>Putative triacylglycerol synthase Rv1425</fullName>
    </alternativeName>
</protein>
<keyword id="KW-0012">Acyltransferase</keyword>
<keyword id="KW-0319">Glycerol metabolism</keyword>
<keyword id="KW-0444">Lipid biosynthesis</keyword>
<keyword id="KW-0443">Lipid metabolism</keyword>
<keyword id="KW-1185">Reference proteome</keyword>
<keyword id="KW-0808">Transferase</keyword>
<evidence type="ECO:0000250" key="1">
    <source>
        <dbReference type="UniProtKB" id="P9WKC9"/>
    </source>
</evidence>
<evidence type="ECO:0000255" key="2"/>
<evidence type="ECO:0000269" key="3">
    <source>
    </source>
</evidence>
<evidence type="ECO:0000305" key="4"/>
<organism>
    <name type="scientific">Mycobacterium tuberculosis (strain ATCC 25618 / H37Rv)</name>
    <dbReference type="NCBI Taxonomy" id="83332"/>
    <lineage>
        <taxon>Bacteria</taxon>
        <taxon>Bacillati</taxon>
        <taxon>Actinomycetota</taxon>
        <taxon>Actinomycetes</taxon>
        <taxon>Mycobacteriales</taxon>
        <taxon>Mycobacteriaceae</taxon>
        <taxon>Mycobacterium</taxon>
        <taxon>Mycobacterium tuberculosis complex</taxon>
    </lineage>
</organism>
<proteinExistence type="evidence at protein level"/>
<sequence>MKRLSSVDAAFWSAETAGWHMHVGALAICDPSDAPEYSFQRLRELIIERLPEIPQLRWRVTGAPLGLDRPWFVEDEELDIDFHIRRIGVPAPGGRRELEELVGRLMSYKLDRSRPLWELWVIEGVEGGRIATLTKMHHAIVDGVSGAGLGEILLDITPEPRPPQQETVGFVGFQIPGLERRAIGALINVGIMTPFRIVRLLEQTVRQQIAALGVAGKPARYFEAPKTRFNAPVSPHRRVTGTRVELARAKAVKDAFGVKLNDVVLALVAGAARQYLQKRDELPAKPLIAQIPVSTRSEETKADVGNQVSSMTASLATHIEDPAKRLAAIHESTLSAKEMAKAPSAHQIMGLTETTPPGLLQLAARAYTASGLSHNLAPINLVVSNVPGPPFPLYMAGARLDSLVPLGPPVMDVALNITCFSYQDYLDFGLVTTPEVANDIDEMADAIEPALAELERAAE</sequence>
<accession>P9WKC1</accession>
<accession>L0T9D0</accession>
<accession>O06833</accession>
<accession>P71694</accession>
<reference key="1">
    <citation type="journal article" date="1998" name="Nature">
        <title>Deciphering the biology of Mycobacterium tuberculosis from the complete genome sequence.</title>
        <authorList>
            <person name="Cole S.T."/>
            <person name="Brosch R."/>
            <person name="Parkhill J."/>
            <person name="Garnier T."/>
            <person name="Churcher C.M."/>
            <person name="Harris D.E."/>
            <person name="Gordon S.V."/>
            <person name="Eiglmeier K."/>
            <person name="Gas S."/>
            <person name="Barry C.E. III"/>
            <person name="Tekaia F."/>
            <person name="Badcock K."/>
            <person name="Basham D."/>
            <person name="Brown D."/>
            <person name="Chillingworth T."/>
            <person name="Connor R."/>
            <person name="Davies R.M."/>
            <person name="Devlin K."/>
            <person name="Feltwell T."/>
            <person name="Gentles S."/>
            <person name="Hamlin N."/>
            <person name="Holroyd S."/>
            <person name="Hornsby T."/>
            <person name="Jagels K."/>
            <person name="Krogh A."/>
            <person name="McLean J."/>
            <person name="Moule S."/>
            <person name="Murphy L.D."/>
            <person name="Oliver S."/>
            <person name="Osborne J."/>
            <person name="Quail M.A."/>
            <person name="Rajandream M.A."/>
            <person name="Rogers J."/>
            <person name="Rutter S."/>
            <person name="Seeger K."/>
            <person name="Skelton S."/>
            <person name="Squares S."/>
            <person name="Squares R."/>
            <person name="Sulston J.E."/>
            <person name="Taylor K."/>
            <person name="Whitehead S."/>
            <person name="Barrell B.G."/>
        </authorList>
    </citation>
    <scope>NUCLEOTIDE SEQUENCE [LARGE SCALE GENOMIC DNA]</scope>
    <source>
        <strain>ATCC 25618 / H37Rv</strain>
    </source>
</reference>
<reference key="2">
    <citation type="journal article" date="2004" name="J. Bacteriol.">
        <title>Induction of a novel class of diacylglycerol acyltransferases and triacylglycerol accumulation in Mycobacterium tuberculosis as it goes into a dormancy-like state in culture.</title>
        <authorList>
            <person name="Daniel J."/>
            <person name="Deb C."/>
            <person name="Dubey V.S."/>
            <person name="Sirakova T.D."/>
            <person name="Abomoelak B."/>
            <person name="Morbidoni H.R."/>
            <person name="Kolattukudy P.E."/>
        </authorList>
    </citation>
    <scope>EXPRESSION IN E.COLI</scope>
    <scope>INDUCTION</scope>
    <source>
        <strain>ATCC 25618 / H37Rv</strain>
    </source>
</reference>
<reference key="3">
    <citation type="journal article" date="2011" name="Mol. Cell. Proteomics">
        <title>Proteogenomic analysis of Mycobacterium tuberculosis by high resolution mass spectrometry.</title>
        <authorList>
            <person name="Kelkar D.S."/>
            <person name="Kumar D."/>
            <person name="Kumar P."/>
            <person name="Balakrishnan L."/>
            <person name="Muthusamy B."/>
            <person name="Yadav A.K."/>
            <person name="Shrivastava P."/>
            <person name="Marimuthu A."/>
            <person name="Anand S."/>
            <person name="Sundaram H."/>
            <person name="Kingsbury R."/>
            <person name="Harsha H.C."/>
            <person name="Nair B."/>
            <person name="Prasad T.S."/>
            <person name="Chauhan D.S."/>
            <person name="Katoch K."/>
            <person name="Katoch V.M."/>
            <person name="Kumar P."/>
            <person name="Chaerkady R."/>
            <person name="Ramachandran S."/>
            <person name="Dash D."/>
            <person name="Pandey A."/>
        </authorList>
    </citation>
    <scope>IDENTIFICATION BY MASS SPECTROMETRY [LARGE SCALE ANALYSIS]</scope>
    <source>
        <strain>ATCC 25618 / H37Rv</strain>
    </source>
</reference>
<name>Y1425_MYCTU</name>
<gene>
    <name type="ordered locus">Rv1425</name>
    <name type="ORF">MTCY21B4.43</name>
    <name type="ORF">MTCY493.29c</name>
</gene>
<dbReference type="EC" id="2.3.1.20" evidence="1"/>
<dbReference type="EMBL" id="AL123456">
    <property type="protein sequence ID" value="CCP44184.1"/>
    <property type="molecule type" value="Genomic_DNA"/>
</dbReference>
<dbReference type="PIR" id="D70914">
    <property type="entry name" value="D70914"/>
</dbReference>
<dbReference type="RefSeq" id="NP_215941.1">
    <property type="nucleotide sequence ID" value="NC_000962.3"/>
</dbReference>
<dbReference type="RefSeq" id="WP_003898875.1">
    <property type="nucleotide sequence ID" value="NZ_NVQJ01000038.1"/>
</dbReference>
<dbReference type="SMR" id="P9WKC1"/>
<dbReference type="STRING" id="83332.Rv1425"/>
<dbReference type="PaxDb" id="83332-Rv1425"/>
<dbReference type="DNASU" id="886668"/>
<dbReference type="GeneID" id="886668"/>
<dbReference type="KEGG" id="mtu:Rv1425"/>
<dbReference type="KEGG" id="mtv:RVBD_1425"/>
<dbReference type="TubercuList" id="Rv1425"/>
<dbReference type="eggNOG" id="COG1020">
    <property type="taxonomic scope" value="Bacteria"/>
</dbReference>
<dbReference type="InParanoid" id="P9WKC1"/>
<dbReference type="OrthoDB" id="9810950at2"/>
<dbReference type="PhylomeDB" id="P9WKC1"/>
<dbReference type="UniPathway" id="UPA00282"/>
<dbReference type="Proteomes" id="UP000001584">
    <property type="component" value="Chromosome"/>
</dbReference>
<dbReference type="GO" id="GO:0005886">
    <property type="term" value="C:plasma membrane"/>
    <property type="evidence" value="ECO:0007005"/>
    <property type="project" value="MTBBASE"/>
</dbReference>
<dbReference type="GO" id="GO:0004144">
    <property type="term" value="F:diacylglycerol O-acyltransferase activity"/>
    <property type="evidence" value="ECO:0007669"/>
    <property type="project" value="UniProtKB-EC"/>
</dbReference>
<dbReference type="GO" id="GO:0008374">
    <property type="term" value="F:O-acyltransferase activity"/>
    <property type="evidence" value="ECO:0000318"/>
    <property type="project" value="GO_Central"/>
</dbReference>
<dbReference type="GO" id="GO:0051701">
    <property type="term" value="P:biological process involved in interaction with host"/>
    <property type="evidence" value="ECO:0000318"/>
    <property type="project" value="GO_Central"/>
</dbReference>
<dbReference type="GO" id="GO:0006071">
    <property type="term" value="P:glycerol metabolic process"/>
    <property type="evidence" value="ECO:0007669"/>
    <property type="project" value="UniProtKB-KW"/>
</dbReference>
<dbReference type="GO" id="GO:0001666">
    <property type="term" value="P:response to hypoxia"/>
    <property type="evidence" value="ECO:0000318"/>
    <property type="project" value="GO_Central"/>
</dbReference>
<dbReference type="GO" id="GO:0071731">
    <property type="term" value="P:response to nitric oxide"/>
    <property type="evidence" value="ECO:0000318"/>
    <property type="project" value="GO_Central"/>
</dbReference>
<dbReference type="GO" id="GO:0019432">
    <property type="term" value="P:triglyceride biosynthetic process"/>
    <property type="evidence" value="ECO:0000318"/>
    <property type="project" value="GO_Central"/>
</dbReference>
<dbReference type="InterPro" id="IPR014292">
    <property type="entry name" value="Acyl_transf_WS/DGAT"/>
</dbReference>
<dbReference type="InterPro" id="IPR045034">
    <property type="entry name" value="O-acyltransferase_WSD1-like"/>
</dbReference>
<dbReference type="InterPro" id="IPR009721">
    <property type="entry name" value="O-acyltransferase_WSD1_C"/>
</dbReference>
<dbReference type="InterPro" id="IPR004255">
    <property type="entry name" value="O-acyltransferase_WSD1_N"/>
</dbReference>
<dbReference type="NCBIfam" id="TIGR02946">
    <property type="entry name" value="acyl_WS_DGAT"/>
    <property type="match status" value="1"/>
</dbReference>
<dbReference type="PANTHER" id="PTHR31650">
    <property type="entry name" value="O-ACYLTRANSFERASE (WSD1-LIKE) FAMILY PROTEIN"/>
    <property type="match status" value="1"/>
</dbReference>
<dbReference type="PANTHER" id="PTHR31650:SF1">
    <property type="entry name" value="WAX ESTER SYNTHASE_DIACYLGLYCEROL ACYLTRANSFERASE 4-RELATED"/>
    <property type="match status" value="1"/>
</dbReference>
<dbReference type="Pfam" id="PF06974">
    <property type="entry name" value="WS_DGAT_C"/>
    <property type="match status" value="1"/>
</dbReference>
<dbReference type="Pfam" id="PF03007">
    <property type="entry name" value="WS_DGAT_cat"/>
    <property type="match status" value="1"/>
</dbReference>
<dbReference type="SUPFAM" id="SSF52777">
    <property type="entry name" value="CoA-dependent acyltransferases"/>
    <property type="match status" value="1"/>
</dbReference>